<keyword id="KW-0489">Methyltransferase</keyword>
<keyword id="KW-0539">Nucleus</keyword>
<keyword id="KW-1185">Reference proteome</keyword>
<keyword id="KW-0949">S-adenosyl-L-methionine</keyword>
<keyword id="KW-0749">Sporulation</keyword>
<keyword id="KW-0804">Transcription</keyword>
<keyword id="KW-0805">Transcription regulation</keyword>
<keyword id="KW-0808">Transferase</keyword>
<keyword id="KW-0843">Virulence</keyword>
<reference key="1">
    <citation type="journal article" date="2015" name="Genome Announc.">
        <title>Draft genome sequence of the cellulolytic fungus Chaetomium globosum.</title>
        <authorList>
            <person name="Cuomo C.A."/>
            <person name="Untereiner W.A."/>
            <person name="Ma L.-J."/>
            <person name="Grabherr M."/>
            <person name="Birren B.W."/>
        </authorList>
    </citation>
    <scope>NUCLEOTIDE SEQUENCE [LARGE SCALE GENOMIC DNA]</scope>
    <source>
        <strain>ATCC 6205 / CBS 148.51 / DSM 1962 / NBRC 6347 / NRRL 1970</strain>
    </source>
</reference>
<reference key="2">
    <citation type="journal article" date="2021" name="Fungal Biol.">
        <title>Requirement of LaeA for sporulation, pigmentation and secondary metabolism in Chaetomium globosum.</title>
        <authorList>
            <person name="Cheng M."/>
            <person name="Zhao S."/>
            <person name="Lin C."/>
            <person name="Song J."/>
            <person name="Yang Q."/>
        </authorList>
    </citation>
    <scope>FUNCTION</scope>
    <scope>DISRUPTION PHENOTYPE</scope>
</reference>
<reference key="3">
    <citation type="journal article" date="2022" name="Synth. Syst. Biotechnol.">
        <title>CgVeA, a light signaling responsive regulator, is involved in regulation of chaetoglobosin A biosynthesis and conidia development in Chaetomium globosum.</title>
        <authorList>
            <person name="Wang Z."/>
            <person name="Zhao S."/>
            <person name="Zhang K."/>
            <person name="Lin C."/>
            <person name="Ru X."/>
            <person name="Yang Q."/>
        </authorList>
    </citation>
    <scope>INDUCTION</scope>
</reference>
<sequence>MAMDSQPFRGHIPNGVPPNRTYQEVYAENGRWYGTFKKGKYMFPIDESSWSRAEMRVIVLPSTTRKLLVYWTWVAGQVSGASTWPIIGPRVYAEIYRHLKPYYGYFEQVEIDWSPRSDDGSLRRDGYVVQWANELMDAMDSFGRPIRLDSNLTKQRLADVGFDEIKEEVIQLPLNGWPTEVHNRELGRWFNLGVRQAFQPLSLAPLCRGHGRTPAQVDELAEKARGEVYSNSVRAYCTFPSFAEPAGYAQVTPKSTIPAPFQRAWVGSREPQSGTCSVQRENGANGDRSTLSATGTFHVIRRIRAAQTPAAVGKRQDAG</sequence>
<organism>
    <name type="scientific">Chaetomium globosum (strain ATCC 6205 / CBS 148.51 / DSM 1962 / NBRC 6347 / NRRL 1970)</name>
    <name type="common">Soil fungus</name>
    <dbReference type="NCBI Taxonomy" id="306901"/>
    <lineage>
        <taxon>Eukaryota</taxon>
        <taxon>Fungi</taxon>
        <taxon>Dikarya</taxon>
        <taxon>Ascomycota</taxon>
        <taxon>Pezizomycotina</taxon>
        <taxon>Sordariomycetes</taxon>
        <taxon>Sordariomycetidae</taxon>
        <taxon>Sordariales</taxon>
        <taxon>Chaetomiaceae</taxon>
        <taxon>Chaetomium</taxon>
    </lineage>
</organism>
<evidence type="ECO:0000250" key="1">
    <source>
        <dbReference type="UniProtKB" id="C8VQG9"/>
    </source>
</evidence>
<evidence type="ECO:0000256" key="2">
    <source>
        <dbReference type="SAM" id="MobiDB-lite"/>
    </source>
</evidence>
<evidence type="ECO:0000269" key="3">
    <source>
    </source>
</evidence>
<evidence type="ECO:0000269" key="4">
    <source>
    </source>
</evidence>
<evidence type="ECO:0000303" key="5">
    <source>
    </source>
</evidence>
<evidence type="ECO:0000305" key="6"/>
<dbReference type="EC" id="2.1.1.-" evidence="1"/>
<dbReference type="EMBL" id="CH408029">
    <property type="protein sequence ID" value="EAQ93455.1"/>
    <property type="molecule type" value="Genomic_DNA"/>
</dbReference>
<dbReference type="RefSeq" id="XP_001220911.1">
    <property type="nucleotide sequence ID" value="XM_001220910.1"/>
</dbReference>
<dbReference type="STRING" id="306901.Q2HDL4"/>
<dbReference type="GeneID" id="4388112"/>
<dbReference type="VEuPathDB" id="FungiDB:CHGG_01690"/>
<dbReference type="eggNOG" id="ENOG502QQMC">
    <property type="taxonomic scope" value="Eukaryota"/>
</dbReference>
<dbReference type="HOGENOM" id="CLU_871534_0_0_1"/>
<dbReference type="InParanoid" id="Q2HDL4"/>
<dbReference type="OrthoDB" id="2013972at2759"/>
<dbReference type="Proteomes" id="UP000001056">
    <property type="component" value="Unassembled WGS sequence"/>
</dbReference>
<dbReference type="GO" id="GO:0005634">
    <property type="term" value="C:nucleus"/>
    <property type="evidence" value="ECO:0007669"/>
    <property type="project" value="UniProtKB-SubCell"/>
</dbReference>
<dbReference type="GO" id="GO:0008168">
    <property type="term" value="F:methyltransferase activity"/>
    <property type="evidence" value="ECO:0007669"/>
    <property type="project" value="UniProtKB-KW"/>
</dbReference>
<dbReference type="GO" id="GO:0032259">
    <property type="term" value="P:methylation"/>
    <property type="evidence" value="ECO:0007669"/>
    <property type="project" value="UniProtKB-KW"/>
</dbReference>
<dbReference type="GO" id="GO:0030435">
    <property type="term" value="P:sporulation resulting in formation of a cellular spore"/>
    <property type="evidence" value="ECO:0007669"/>
    <property type="project" value="UniProtKB-KW"/>
</dbReference>
<dbReference type="InterPro" id="IPR029063">
    <property type="entry name" value="SAM-dependent_MTases_sf"/>
</dbReference>
<dbReference type="SUPFAM" id="SSF53335">
    <property type="entry name" value="S-adenosyl-L-methionine-dependent methyltransferases"/>
    <property type="match status" value="1"/>
</dbReference>
<name>LAEA_CHAGB</name>
<comment type="function">
    <text evidence="3">Methyltransferase; component of the velvet transcription factor complex that acts as a global regulator for secondary metabolite gene expression (PubMed:33766309). Controls the expression of the chaetoglobosin A biosynthesis cluster via the cheR transcription factor and the subsequent production of chaetoglobosin A (PubMed:33766309). Positively regulates the expression of smtA and negatively regulates the expression of velB (PubMed:33766309). LaeA also regulates pigmentation and spores production (PubMed:33766309).</text>
</comment>
<comment type="catalytic activity">
    <reaction evidence="1">
        <text>L-methionyl-[protein] + S-adenosyl-L-methionine = S-methyl-L-methionyl-[protein] + S-adenosyl-L-homocysteine</text>
        <dbReference type="Rhea" id="RHEA:60560"/>
        <dbReference type="Rhea" id="RHEA-COMP:12313"/>
        <dbReference type="Rhea" id="RHEA-COMP:15592"/>
        <dbReference type="ChEBI" id="CHEBI:16044"/>
        <dbReference type="ChEBI" id="CHEBI:57856"/>
        <dbReference type="ChEBI" id="CHEBI:59789"/>
        <dbReference type="ChEBI" id="CHEBI:142742"/>
    </reaction>
    <physiologicalReaction direction="left-to-right" evidence="1">
        <dbReference type="Rhea" id="RHEA:60561"/>
    </physiologicalReaction>
</comment>
<comment type="subunit">
    <text evidence="1">Component of the heterotrimeric velvet complex composed of laeA, veA and velB; VeA acting as a bridging protein between laeA and velB.</text>
</comment>
<comment type="subcellular location">
    <subcellularLocation>
        <location evidence="1">Nucleus</location>
    </subcellularLocation>
</comment>
<comment type="induction">
    <text evidence="4">Expression is regulated by the developmental and secondary metabolism regulator veA.</text>
</comment>
<comment type="disruption phenotype">
    <text evidence="3">Abolishes the production of chaetoglobosin A (PubMed:33766309). Increases the expression of velB (PubMed:33766309). Leads to reduced amounts of spores (PubMed:33766309).</text>
</comment>
<comment type="similarity">
    <text evidence="6">Belongs to the methyltransferase superfamily. LaeA methyltransferase family.</text>
</comment>
<feature type="chain" id="PRO_0000457173" description="Protein-methionine methyltransferase laeA">
    <location>
        <begin position="1"/>
        <end position="319"/>
    </location>
</feature>
<feature type="region of interest" description="Disordered" evidence="2">
    <location>
        <begin position="269"/>
        <end position="293"/>
    </location>
</feature>
<feature type="compositionally biased region" description="Polar residues" evidence="2">
    <location>
        <begin position="270"/>
        <end position="293"/>
    </location>
</feature>
<gene>
    <name evidence="5" type="primary">laeA</name>
    <name type="ORF">CHGG_01690</name>
</gene>
<accession>Q2HDL4</accession>
<proteinExistence type="evidence at transcript level"/>
<protein>
    <recommendedName>
        <fullName evidence="6">Protein-methionine methyltransferase laeA</fullName>
        <ecNumber evidence="1">2.1.1.-</ecNumber>
    </recommendedName>
    <alternativeName>
        <fullName evidence="5">Secondary metabolism regulator laeA</fullName>
    </alternativeName>
    <alternativeName>
        <fullName evidence="1">Velvet complex subunit laeA</fullName>
    </alternativeName>
</protein>